<protein>
    <recommendedName>
        <fullName evidence="1">Adenine deaminase</fullName>
        <shortName evidence="1">Adenase</shortName>
        <shortName evidence="1">Adenine aminase</shortName>
        <ecNumber evidence="1">3.5.4.2</ecNumber>
    </recommendedName>
</protein>
<evidence type="ECO:0000255" key="1">
    <source>
        <dbReference type="HAMAP-Rule" id="MF_01518"/>
    </source>
</evidence>
<name>ADEC_LIGS1</name>
<organism>
    <name type="scientific">Ligilactobacillus salivarius (strain UCC118)</name>
    <name type="common">Lactobacillus salivarius</name>
    <dbReference type="NCBI Taxonomy" id="362948"/>
    <lineage>
        <taxon>Bacteria</taxon>
        <taxon>Bacillati</taxon>
        <taxon>Bacillota</taxon>
        <taxon>Bacilli</taxon>
        <taxon>Lactobacillales</taxon>
        <taxon>Lactobacillaceae</taxon>
        <taxon>Ligilactobacillus</taxon>
    </lineage>
</organism>
<feature type="chain" id="PRO_0000292386" description="Adenine deaminase">
    <location>
        <begin position="1"/>
        <end position="578"/>
    </location>
</feature>
<keyword id="KW-0378">Hydrolase</keyword>
<keyword id="KW-0464">Manganese</keyword>
<keyword id="KW-1185">Reference proteome</keyword>
<proteinExistence type="inferred from homology"/>
<gene>
    <name evidence="1" type="primary">ade</name>
    <name type="ordered locus">LSL_0929</name>
</gene>
<comment type="catalytic activity">
    <reaction evidence="1">
        <text>adenine + H2O + H(+) = hypoxanthine + NH4(+)</text>
        <dbReference type="Rhea" id="RHEA:23688"/>
        <dbReference type="ChEBI" id="CHEBI:15377"/>
        <dbReference type="ChEBI" id="CHEBI:15378"/>
        <dbReference type="ChEBI" id="CHEBI:16708"/>
        <dbReference type="ChEBI" id="CHEBI:17368"/>
        <dbReference type="ChEBI" id="CHEBI:28938"/>
        <dbReference type="EC" id="3.5.4.2"/>
    </reaction>
</comment>
<comment type="cofactor">
    <cofactor evidence="1">
        <name>Mn(2+)</name>
        <dbReference type="ChEBI" id="CHEBI:29035"/>
    </cofactor>
</comment>
<comment type="similarity">
    <text evidence="1">Belongs to the metallo-dependent hydrolases superfamily. Adenine deaminase family.</text>
</comment>
<sequence length="578" mass="62987">MEKQKLIKLIDVAAGRKKADLVLKNAKIVDVFQAKILTGDIAISDGYIAGIGGSYQGVVECNYTGKYVAPGFIEAHIHIESSYVSPEEFSRVFIPRGTTTILADPHEIVNVAGLKGLDYMVNAAKNAKMDIRYMMPPCVPATNFETSGADLYADDMEDALKTGEVDGLAELMNFPGVINADDKMIDEILMAKKYGARIDGHAPQVVGKDLNAYIAAGPANDHECSTLEEAEERLARGMYLLLREGSVTQDLRKLLPIVNTANSRRCLLSGDDVQAKTAINKGHLDNSIRICIDEGLNPITAIQMATLNPAEYCGLNDRGAIAPGRRADMVVFESLEDFAVEETYILGEKLSQGNEYLGEVNYYPIDSVESSMHVKDFTREKLQLHLNSDKVRAIGVVPGEVLTTEEHVTVKRDGDGNFVYNDQEDVTKIVVVERHHNTGNVNVNLLSGYGIKAGAIAISIGHDSHNIIATGTNDDDIFMAVNELIKQEGGAVVVKDEKVISRMELKIAGLMCNLPAEKMIAQQDALDEAVHEELGVPDNVNPVMTLSFMPLAVIPKLKITDKGLVDVEKNAFVSNELD</sequence>
<accession>Q1WTM3</accession>
<reference key="1">
    <citation type="journal article" date="2006" name="Proc. Natl. Acad. Sci. U.S.A.">
        <title>Multireplicon genome architecture of Lactobacillus salivarius.</title>
        <authorList>
            <person name="Claesson M.J."/>
            <person name="Li Y."/>
            <person name="Leahy S."/>
            <person name="Canchaya C."/>
            <person name="van Pijkeren J.P."/>
            <person name="Cerdeno-Tarraga A.M."/>
            <person name="Parkhill J."/>
            <person name="Flynn S."/>
            <person name="O'Sullivan G.C."/>
            <person name="Collins J.K."/>
            <person name="Higgins D."/>
            <person name="Shanahan F."/>
            <person name="Fitzgerald G.F."/>
            <person name="van Sinderen D."/>
            <person name="O'Toole P.W."/>
        </authorList>
    </citation>
    <scope>NUCLEOTIDE SEQUENCE [LARGE SCALE GENOMIC DNA]</scope>
    <source>
        <strain>UCC118</strain>
    </source>
</reference>
<dbReference type="EC" id="3.5.4.2" evidence="1"/>
<dbReference type="EMBL" id="CP000233">
    <property type="protein sequence ID" value="ABD99739.1"/>
    <property type="molecule type" value="Genomic_DNA"/>
</dbReference>
<dbReference type="RefSeq" id="WP_011476052.1">
    <property type="nucleotide sequence ID" value="NC_007929.1"/>
</dbReference>
<dbReference type="RefSeq" id="YP_535822.1">
    <property type="nucleotide sequence ID" value="NC_007929.1"/>
</dbReference>
<dbReference type="SMR" id="Q1WTM3"/>
<dbReference type="STRING" id="362948.LSL_0929"/>
<dbReference type="KEGG" id="lsl:LSL_0929"/>
<dbReference type="PATRIC" id="fig|362948.14.peg.1004"/>
<dbReference type="HOGENOM" id="CLU_027935_0_0_9"/>
<dbReference type="OrthoDB" id="9775607at2"/>
<dbReference type="Proteomes" id="UP000006559">
    <property type="component" value="Chromosome"/>
</dbReference>
<dbReference type="GO" id="GO:0000034">
    <property type="term" value="F:adenine deaminase activity"/>
    <property type="evidence" value="ECO:0007669"/>
    <property type="project" value="UniProtKB-UniRule"/>
</dbReference>
<dbReference type="GO" id="GO:0006146">
    <property type="term" value="P:adenine catabolic process"/>
    <property type="evidence" value="ECO:0007669"/>
    <property type="project" value="InterPro"/>
</dbReference>
<dbReference type="CDD" id="cd01295">
    <property type="entry name" value="AdeC"/>
    <property type="match status" value="1"/>
</dbReference>
<dbReference type="Gene3D" id="3.20.20.140">
    <property type="entry name" value="Metal-dependent hydrolases"/>
    <property type="match status" value="1"/>
</dbReference>
<dbReference type="Gene3D" id="2.30.40.10">
    <property type="entry name" value="Urease, subunit C, domain 1"/>
    <property type="match status" value="1"/>
</dbReference>
<dbReference type="HAMAP" id="MF_01518">
    <property type="entry name" value="Adenine_deamin"/>
    <property type="match status" value="1"/>
</dbReference>
<dbReference type="InterPro" id="IPR006679">
    <property type="entry name" value="Adenine_deam"/>
</dbReference>
<dbReference type="InterPro" id="IPR026912">
    <property type="entry name" value="Adenine_deam_C"/>
</dbReference>
<dbReference type="InterPro" id="IPR006680">
    <property type="entry name" value="Amidohydro-rel"/>
</dbReference>
<dbReference type="InterPro" id="IPR011059">
    <property type="entry name" value="Metal-dep_hydrolase_composite"/>
</dbReference>
<dbReference type="InterPro" id="IPR032466">
    <property type="entry name" value="Metal_Hydrolase"/>
</dbReference>
<dbReference type="NCBIfam" id="TIGR01178">
    <property type="entry name" value="ade"/>
    <property type="match status" value="1"/>
</dbReference>
<dbReference type="PANTHER" id="PTHR11113:SF2">
    <property type="entry name" value="ADENINE DEAMINASE"/>
    <property type="match status" value="1"/>
</dbReference>
<dbReference type="PANTHER" id="PTHR11113">
    <property type="entry name" value="N-ACETYLGLUCOSAMINE-6-PHOSPHATE DEACETYLASE"/>
    <property type="match status" value="1"/>
</dbReference>
<dbReference type="Pfam" id="PF13382">
    <property type="entry name" value="Adenine_deam_C"/>
    <property type="match status" value="1"/>
</dbReference>
<dbReference type="Pfam" id="PF01979">
    <property type="entry name" value="Amidohydro_1"/>
    <property type="match status" value="1"/>
</dbReference>
<dbReference type="SUPFAM" id="SSF51338">
    <property type="entry name" value="Composite domain of metallo-dependent hydrolases"/>
    <property type="match status" value="1"/>
</dbReference>
<dbReference type="SUPFAM" id="SSF51556">
    <property type="entry name" value="Metallo-dependent hydrolases"/>
    <property type="match status" value="1"/>
</dbReference>